<accession>Q8Y793</accession>
<comment type="similarity">
    <text evidence="1">Belongs to the CinA family.</text>
</comment>
<feature type="chain" id="PRO_0000156766" description="Putative competence-damage inducible protein">
    <location>
        <begin position="1"/>
        <end position="414"/>
    </location>
</feature>
<dbReference type="EMBL" id="AL591979">
    <property type="protein sequence ID" value="CAC99475.1"/>
    <property type="molecule type" value="Genomic_DNA"/>
</dbReference>
<dbReference type="PIR" id="AE1249">
    <property type="entry name" value="AE1249"/>
</dbReference>
<dbReference type="RefSeq" id="NP_464922.1">
    <property type="nucleotide sequence ID" value="NC_003210.1"/>
</dbReference>
<dbReference type="RefSeq" id="WP_003732285.1">
    <property type="nucleotide sequence ID" value="NZ_CP149495.1"/>
</dbReference>
<dbReference type="SMR" id="Q8Y793"/>
<dbReference type="STRING" id="169963.gene:17594054"/>
<dbReference type="PaxDb" id="169963-lmo1397"/>
<dbReference type="EnsemblBacteria" id="CAC99475">
    <property type="protein sequence ID" value="CAC99475"/>
    <property type="gene ID" value="CAC99475"/>
</dbReference>
<dbReference type="GeneID" id="987615"/>
<dbReference type="KEGG" id="lmo:lmo1397"/>
<dbReference type="PATRIC" id="fig|169963.11.peg.1435"/>
<dbReference type="eggNOG" id="COG1058">
    <property type="taxonomic scope" value="Bacteria"/>
</dbReference>
<dbReference type="eggNOG" id="COG1546">
    <property type="taxonomic scope" value="Bacteria"/>
</dbReference>
<dbReference type="HOGENOM" id="CLU_030805_9_3_9"/>
<dbReference type="OrthoDB" id="9801454at2"/>
<dbReference type="PhylomeDB" id="Q8Y793"/>
<dbReference type="BioCyc" id="LMON169963:LMO1397-MONOMER"/>
<dbReference type="Proteomes" id="UP000000817">
    <property type="component" value="Chromosome"/>
</dbReference>
<dbReference type="CDD" id="cd00885">
    <property type="entry name" value="cinA"/>
    <property type="match status" value="1"/>
</dbReference>
<dbReference type="Gene3D" id="3.30.70.2860">
    <property type="match status" value="1"/>
</dbReference>
<dbReference type="Gene3D" id="3.90.950.20">
    <property type="entry name" value="CinA-like"/>
    <property type="match status" value="1"/>
</dbReference>
<dbReference type="Gene3D" id="3.40.980.10">
    <property type="entry name" value="MoaB/Mog-like domain"/>
    <property type="match status" value="1"/>
</dbReference>
<dbReference type="HAMAP" id="MF_00226_B">
    <property type="entry name" value="CinA_B"/>
    <property type="match status" value="1"/>
</dbReference>
<dbReference type="InterPro" id="IPR050101">
    <property type="entry name" value="CinA"/>
</dbReference>
<dbReference type="InterPro" id="IPR036653">
    <property type="entry name" value="CinA-like_C"/>
</dbReference>
<dbReference type="InterPro" id="IPR008136">
    <property type="entry name" value="CinA_C"/>
</dbReference>
<dbReference type="InterPro" id="IPR041424">
    <property type="entry name" value="CinA_KH"/>
</dbReference>
<dbReference type="InterPro" id="IPR008135">
    <property type="entry name" value="Competence-induced_CinA"/>
</dbReference>
<dbReference type="InterPro" id="IPR036425">
    <property type="entry name" value="MoaB/Mog-like_dom_sf"/>
</dbReference>
<dbReference type="InterPro" id="IPR001453">
    <property type="entry name" value="MoaB/Mog_dom"/>
</dbReference>
<dbReference type="NCBIfam" id="TIGR00200">
    <property type="entry name" value="cinA_nterm"/>
    <property type="match status" value="1"/>
</dbReference>
<dbReference type="NCBIfam" id="TIGR00177">
    <property type="entry name" value="molyb_syn"/>
    <property type="match status" value="1"/>
</dbReference>
<dbReference type="NCBIfam" id="TIGR00199">
    <property type="entry name" value="PncC_domain"/>
    <property type="match status" value="1"/>
</dbReference>
<dbReference type="NCBIfam" id="NF001813">
    <property type="entry name" value="PRK00549.1"/>
    <property type="match status" value="1"/>
</dbReference>
<dbReference type="PANTHER" id="PTHR13939">
    <property type="entry name" value="NICOTINAMIDE-NUCLEOTIDE AMIDOHYDROLASE PNCC"/>
    <property type="match status" value="1"/>
</dbReference>
<dbReference type="PANTHER" id="PTHR13939:SF0">
    <property type="entry name" value="NMN AMIDOHYDROLASE-LIKE PROTEIN YFAY"/>
    <property type="match status" value="1"/>
</dbReference>
<dbReference type="Pfam" id="PF02464">
    <property type="entry name" value="CinA"/>
    <property type="match status" value="1"/>
</dbReference>
<dbReference type="Pfam" id="PF18146">
    <property type="entry name" value="CinA_KH"/>
    <property type="match status" value="1"/>
</dbReference>
<dbReference type="Pfam" id="PF00994">
    <property type="entry name" value="MoCF_biosynth"/>
    <property type="match status" value="1"/>
</dbReference>
<dbReference type="PIRSF" id="PIRSF006728">
    <property type="entry name" value="CinA"/>
    <property type="match status" value="1"/>
</dbReference>
<dbReference type="SMART" id="SM00852">
    <property type="entry name" value="MoCF_biosynth"/>
    <property type="match status" value="1"/>
</dbReference>
<dbReference type="SUPFAM" id="SSF142433">
    <property type="entry name" value="CinA-like"/>
    <property type="match status" value="1"/>
</dbReference>
<dbReference type="SUPFAM" id="SSF53218">
    <property type="entry name" value="Molybdenum cofactor biosynthesis proteins"/>
    <property type="match status" value="1"/>
</dbReference>
<protein>
    <recommendedName>
        <fullName evidence="1">Putative competence-damage inducible protein</fullName>
    </recommendedName>
</protein>
<gene>
    <name evidence="1" type="primary">cinA</name>
    <name type="ordered locus">lmo1397</name>
</gene>
<sequence length="414" mass="45676">MASAEIIAVGTELLLGQIVNSNAAFISQELAADGIYVYHHTVVGDNPTRLKEVIEIAEKRSDILIFTGGLGPTEDDITKQILADHLQKQLVEDEYHMNKINEYFASRNRTMTENNKLQAVIIKDSVVLNNDYGFAAGMYLKENNHTYVLLPGPPSEMKPMFTKYANPLLLSENGNQNILESKIMRFFGIGESQLAADLNDLIVNQVNPTIATYAGDNEVVVRITATAKTKEEASSLVKDTEEEILRRDGTFLYGYGEVSLPELVTAMLLEKELTISAAESFTAGLFQAEIARFPGISKIFKGGMVTYSEETKQSILQVSPQVIKEKGVVSAECAKEMAENVSRLCKTDIGISFTGVAGPDSLEGHPAGTIWIGLSVKGHETEAFQFVYGRDRNHNRRRAVKQGFQLIKQFLDAN</sequence>
<reference key="1">
    <citation type="journal article" date="2001" name="Science">
        <title>Comparative genomics of Listeria species.</title>
        <authorList>
            <person name="Glaser P."/>
            <person name="Frangeul L."/>
            <person name="Buchrieser C."/>
            <person name="Rusniok C."/>
            <person name="Amend A."/>
            <person name="Baquero F."/>
            <person name="Berche P."/>
            <person name="Bloecker H."/>
            <person name="Brandt P."/>
            <person name="Chakraborty T."/>
            <person name="Charbit A."/>
            <person name="Chetouani F."/>
            <person name="Couve E."/>
            <person name="de Daruvar A."/>
            <person name="Dehoux P."/>
            <person name="Domann E."/>
            <person name="Dominguez-Bernal G."/>
            <person name="Duchaud E."/>
            <person name="Durant L."/>
            <person name="Dussurget O."/>
            <person name="Entian K.-D."/>
            <person name="Fsihi H."/>
            <person name="Garcia-del Portillo F."/>
            <person name="Garrido P."/>
            <person name="Gautier L."/>
            <person name="Goebel W."/>
            <person name="Gomez-Lopez N."/>
            <person name="Hain T."/>
            <person name="Hauf J."/>
            <person name="Jackson D."/>
            <person name="Jones L.-M."/>
            <person name="Kaerst U."/>
            <person name="Kreft J."/>
            <person name="Kuhn M."/>
            <person name="Kunst F."/>
            <person name="Kurapkat G."/>
            <person name="Madueno E."/>
            <person name="Maitournam A."/>
            <person name="Mata Vicente J."/>
            <person name="Ng E."/>
            <person name="Nedjari H."/>
            <person name="Nordsiek G."/>
            <person name="Novella S."/>
            <person name="de Pablos B."/>
            <person name="Perez-Diaz J.-C."/>
            <person name="Purcell R."/>
            <person name="Remmel B."/>
            <person name="Rose M."/>
            <person name="Schlueter T."/>
            <person name="Simoes N."/>
            <person name="Tierrez A."/>
            <person name="Vazquez-Boland J.-A."/>
            <person name="Voss H."/>
            <person name="Wehland J."/>
            <person name="Cossart P."/>
        </authorList>
    </citation>
    <scope>NUCLEOTIDE SEQUENCE [LARGE SCALE GENOMIC DNA]</scope>
    <source>
        <strain>ATCC BAA-679 / EGD-e</strain>
    </source>
</reference>
<name>CINA_LISMO</name>
<keyword id="KW-1185">Reference proteome</keyword>
<organism>
    <name type="scientific">Listeria monocytogenes serovar 1/2a (strain ATCC BAA-679 / EGD-e)</name>
    <dbReference type="NCBI Taxonomy" id="169963"/>
    <lineage>
        <taxon>Bacteria</taxon>
        <taxon>Bacillati</taxon>
        <taxon>Bacillota</taxon>
        <taxon>Bacilli</taxon>
        <taxon>Bacillales</taxon>
        <taxon>Listeriaceae</taxon>
        <taxon>Listeria</taxon>
    </lineage>
</organism>
<evidence type="ECO:0000255" key="1">
    <source>
        <dbReference type="HAMAP-Rule" id="MF_00226"/>
    </source>
</evidence>
<proteinExistence type="inferred from homology"/>